<reference key="1">
    <citation type="journal article" date="1995" name="Virology">
        <title>Analysis of the complete nucleotide sequence of African swine fever virus.</title>
        <authorList>
            <person name="Yanez R.J."/>
            <person name="Rodriguez J.M."/>
            <person name="Nogal M.L."/>
            <person name="Yuste L."/>
            <person name="Enriquez C."/>
            <person name="Rodriguez J.F."/>
            <person name="Vinuela E."/>
        </authorList>
    </citation>
    <scope>NUCLEOTIDE SEQUENCE [LARGE SCALE GENOMIC DNA]</scope>
</reference>
<reference key="2">
    <citation type="journal article" date="2001" name="J. Virol.">
        <title>African swine fever virus multigene family 360 and 530 genes are novel macrophage host range determinants.</title>
        <authorList>
            <person name="Zsak L."/>
            <person name="Lu Z."/>
            <person name="Burrage T.G."/>
            <person name="Neilan J.G."/>
            <person name="Kutish G.F."/>
            <person name="Moore D.M."/>
            <person name="Rock D.L."/>
        </authorList>
    </citation>
    <scope>FUNCTION</scope>
</reference>
<reference key="3">
    <citation type="journal article" date="2020" name="J. Virol.">
        <title>The African Swine Fever Virus Transcriptome.</title>
        <authorList>
            <person name="Cackett G."/>
            <person name="Matelska D."/>
            <person name="Sykora M."/>
            <person name="Portugal R."/>
            <person name="Malecki M."/>
            <person name="Baehler J."/>
            <person name="Dixon L."/>
            <person name="Werner F."/>
        </authorList>
    </citation>
    <scope>INDUCTION</scope>
</reference>
<organismHost>
    <name type="scientific">Ornithodoros</name>
    <name type="common">relapsing fever ticks</name>
    <dbReference type="NCBI Taxonomy" id="6937"/>
</organismHost>
<organismHost>
    <name type="scientific">Sus scrofa</name>
    <name type="common">Pig</name>
    <dbReference type="NCBI Taxonomy" id="9823"/>
</organismHost>
<organism>
    <name type="scientific">African swine fever virus (strain Badajoz 1971 Vero-adapted)</name>
    <name type="common">Ba71V</name>
    <name type="synonym">ASFV</name>
    <dbReference type="NCBI Taxonomy" id="10498"/>
    <lineage>
        <taxon>Viruses</taxon>
        <taxon>Varidnaviria</taxon>
        <taxon>Bamfordvirae</taxon>
        <taxon>Nucleocytoviricota</taxon>
        <taxon>Pokkesviricetes</taxon>
        <taxon>Asfuvirales</taxon>
        <taxon>Asfarviridae</taxon>
        <taxon>Asfivirus</taxon>
        <taxon>African swine fever virus</taxon>
    </lineage>
</organism>
<comment type="function">
    <text evidence="1">Plays a role in virus cell tropism, and may be required for efficient virus replication in macrophages.</text>
</comment>
<comment type="induction">
    <text evidence="2">Expressed in the early phase of the viral replicative cycle.</text>
</comment>
<comment type="similarity">
    <text evidence="3">Belongs to the asfivirus MGF 505 family.</text>
</comment>
<proteinExistence type="evidence at transcript level"/>
<keyword id="KW-0244">Early protein</keyword>
<keyword id="KW-1185">Reference proteome</keyword>
<protein>
    <recommendedName>
        <fullName>Protein MGF 505-10R</fullName>
    </recommendedName>
</protein>
<dbReference type="EMBL" id="U02468">
    <property type="protein sequence ID" value="AAA17791.1"/>
    <property type="molecule type" value="Genomic_DNA"/>
</dbReference>
<dbReference type="EMBL" id="U18466">
    <property type="protein sequence ID" value="AAA65262.1"/>
    <property type="molecule type" value="Genomic_DNA"/>
</dbReference>
<dbReference type="RefSeq" id="NP_042726.1">
    <property type="nucleotide sequence ID" value="NC_001659.2"/>
</dbReference>
<dbReference type="SMR" id="Q89869"/>
<dbReference type="GeneID" id="22220414"/>
<dbReference type="KEGG" id="vg:22220414"/>
<dbReference type="Proteomes" id="UP000000624">
    <property type="component" value="Segment"/>
</dbReference>
<dbReference type="InterPro" id="IPR004858">
    <property type="entry name" value="MGF_505"/>
</dbReference>
<dbReference type="Pfam" id="PF03158">
    <property type="entry name" value="DUF249"/>
    <property type="match status" value="1"/>
</dbReference>
<sequence>MFSLQELCRKNIYILPYPLGKHVLQQLGLYWKGHGSLQRIGDDHVLLQQDLIFSINEALRMAAEEGNNEVVKLLLLWEGNLHYAIIGALEGDRYDLIHKYYEQIGDCHKILPLIQDPQIFEKCHELSNSCNIRCLLEHAVKHNMLSILQKHKDQIRLHMALTQILFELACHERKNDIIRWIGYSLHIYHLETIFDVAFAHKNLSLYVLGYELLMHKVNTEAANIDLPNLLSYHLRTAAAGGLLNFMLETIKHGGCVDKTVLSAAIRYKHRKIVAHFIHQVPRKTVKKLLLYAVQARAPKKTLNLLLSSLNYAVHTITKQLVHNVINYSSTLVVKLLLMRRKRKLNLVDAVLARLVKYSTYTDIVQFMGEFSVSPERVIKMAARESRTFLIEMISKAAWGNHPQTLIHHLKHLTNTMKPQSGKDLIIYTIHYIYLNSNMLVAEEEKNIFKLAKFYANHNAVNRFKQICEDYYILDARFKTLILECFEIAVQKNYPRIANIVDDYIRFLFYRGNITEEEIREAYSLKDAEVYVDLKWLQQGEMV</sequence>
<feature type="chain" id="PRO_0000373349" description="Protein MGF 505-10R">
    <location>
        <begin position="1"/>
        <end position="542"/>
    </location>
</feature>
<name>50510_ASFB7</name>
<accession>Q89869</accession>
<gene>
    <name type="ordered locus">BA71R-031</name>
    <name type="ORF">A542R</name>
</gene>
<evidence type="ECO:0000269" key="1">
    <source>
    </source>
</evidence>
<evidence type="ECO:0000269" key="2">
    <source>
    </source>
</evidence>
<evidence type="ECO:0000305" key="3"/>